<sequence>MATPHINAQPGDFAETVLMPGDPLRAKYIAETFLEDVKQVCDVRSMFGFTGTYKGKKVSVMGHGMGIPSCSIYVHELIAEYGVKNIIRIGSCGAVRDDVKLMDVVIGMGASTDSKVNRIRFSGHDFAAIADYDLLETAVNQARAQQVPVKVGNVFSADLFYTPEPEIFEKMKKLGILGVDMEAAGIYGVAADLGARALTILTVSDHILRGEKLSSEDRQKSFNDMMKVALETAINI</sequence>
<gene>
    <name evidence="2" type="primary">deoD2</name>
    <name type="ordered locus">VC_A0053</name>
</gene>
<accession>Q9KNB2</accession>
<comment type="function">
    <text evidence="2">Catalyzes the reversible phosphorolytic breakdown of the N-glycosidic bond in the beta-(deoxy)ribonucleoside molecules, with the formation of the corresponding free purine bases and pentose-1-phosphate.</text>
</comment>
<comment type="catalytic activity">
    <reaction evidence="2">
        <text>a purine D-ribonucleoside + phosphate = a purine nucleobase + alpha-D-ribose 1-phosphate</text>
        <dbReference type="Rhea" id="RHEA:19805"/>
        <dbReference type="ChEBI" id="CHEBI:26386"/>
        <dbReference type="ChEBI" id="CHEBI:43474"/>
        <dbReference type="ChEBI" id="CHEBI:57720"/>
        <dbReference type="ChEBI" id="CHEBI:142355"/>
        <dbReference type="EC" id="2.4.2.1"/>
    </reaction>
</comment>
<comment type="catalytic activity">
    <reaction evidence="2">
        <text>a purine 2'-deoxy-D-ribonucleoside + phosphate = a purine nucleobase + 2-deoxy-alpha-D-ribose 1-phosphate</text>
        <dbReference type="Rhea" id="RHEA:36431"/>
        <dbReference type="ChEBI" id="CHEBI:26386"/>
        <dbReference type="ChEBI" id="CHEBI:43474"/>
        <dbReference type="ChEBI" id="CHEBI:57259"/>
        <dbReference type="ChEBI" id="CHEBI:142361"/>
        <dbReference type="EC" id="2.4.2.1"/>
    </reaction>
</comment>
<comment type="subunit">
    <text evidence="2">Homohexamer; trimer of homodimers.</text>
</comment>
<comment type="similarity">
    <text evidence="2">Belongs to the PNP/UDP phosphorylase family.</text>
</comment>
<comment type="sequence caution" evidence="3">
    <conflict type="erroneous initiation">
        <sequence resource="EMBL-CDS" id="AAF95967"/>
    </conflict>
</comment>
<dbReference type="EC" id="2.4.2.1" evidence="2"/>
<dbReference type="EMBL" id="AE003853">
    <property type="protein sequence ID" value="AAF95967.1"/>
    <property type="status" value="ALT_INIT"/>
    <property type="molecule type" value="Genomic_DNA"/>
</dbReference>
<dbReference type="PIR" id="C82505">
    <property type="entry name" value="C82505"/>
</dbReference>
<dbReference type="RefSeq" id="NP_232454.2">
    <property type="nucleotide sequence ID" value="NC_002506.1"/>
</dbReference>
<dbReference type="SMR" id="Q9KNB2"/>
<dbReference type="STRING" id="243277.VC_A0053"/>
<dbReference type="DNASU" id="2612153"/>
<dbReference type="EnsemblBacteria" id="AAF95967">
    <property type="protein sequence ID" value="AAF95967"/>
    <property type="gene ID" value="VC_A0053"/>
</dbReference>
<dbReference type="KEGG" id="vch:VC_A0053"/>
<dbReference type="PATRIC" id="fig|243277.26.peg.2699"/>
<dbReference type="eggNOG" id="COG0813">
    <property type="taxonomic scope" value="Bacteria"/>
</dbReference>
<dbReference type="HOGENOM" id="CLU_068457_2_0_6"/>
<dbReference type="Proteomes" id="UP000000584">
    <property type="component" value="Chromosome 2"/>
</dbReference>
<dbReference type="GO" id="GO:0005829">
    <property type="term" value="C:cytosol"/>
    <property type="evidence" value="ECO:0000318"/>
    <property type="project" value="GO_Central"/>
</dbReference>
<dbReference type="GO" id="GO:0004731">
    <property type="term" value="F:purine-nucleoside phosphorylase activity"/>
    <property type="evidence" value="ECO:0000318"/>
    <property type="project" value="GO_Central"/>
</dbReference>
<dbReference type="GO" id="GO:0006152">
    <property type="term" value="P:purine nucleoside catabolic process"/>
    <property type="evidence" value="ECO:0000318"/>
    <property type="project" value="GO_Central"/>
</dbReference>
<dbReference type="CDD" id="cd09006">
    <property type="entry name" value="PNP_EcPNPI-like"/>
    <property type="match status" value="1"/>
</dbReference>
<dbReference type="FunFam" id="3.40.50.1580:FF:000002">
    <property type="entry name" value="Purine nucleoside phosphorylase DeoD-type"/>
    <property type="match status" value="1"/>
</dbReference>
<dbReference type="Gene3D" id="3.40.50.1580">
    <property type="entry name" value="Nucleoside phosphorylase domain"/>
    <property type="match status" value="1"/>
</dbReference>
<dbReference type="HAMAP" id="MF_01627">
    <property type="entry name" value="Pur_nucleosid_phosp"/>
    <property type="match status" value="1"/>
</dbReference>
<dbReference type="InterPro" id="IPR004402">
    <property type="entry name" value="DeoD-type"/>
</dbReference>
<dbReference type="InterPro" id="IPR018016">
    <property type="entry name" value="Nucleoside_phosphorylase_CS"/>
</dbReference>
<dbReference type="InterPro" id="IPR000845">
    <property type="entry name" value="Nucleoside_phosphorylase_d"/>
</dbReference>
<dbReference type="InterPro" id="IPR035994">
    <property type="entry name" value="Nucleoside_phosphorylase_sf"/>
</dbReference>
<dbReference type="NCBIfam" id="TIGR00107">
    <property type="entry name" value="deoD"/>
    <property type="match status" value="1"/>
</dbReference>
<dbReference type="NCBIfam" id="NF004489">
    <property type="entry name" value="PRK05819.1"/>
    <property type="match status" value="1"/>
</dbReference>
<dbReference type="NCBIfam" id="NF009914">
    <property type="entry name" value="PRK13374.1"/>
    <property type="match status" value="1"/>
</dbReference>
<dbReference type="PANTHER" id="PTHR43691:SF11">
    <property type="entry name" value="FI09636P-RELATED"/>
    <property type="match status" value="1"/>
</dbReference>
<dbReference type="PANTHER" id="PTHR43691">
    <property type="entry name" value="URIDINE PHOSPHORYLASE"/>
    <property type="match status" value="1"/>
</dbReference>
<dbReference type="Pfam" id="PF01048">
    <property type="entry name" value="PNP_UDP_1"/>
    <property type="match status" value="1"/>
</dbReference>
<dbReference type="SUPFAM" id="SSF53167">
    <property type="entry name" value="Purine and uridine phosphorylases"/>
    <property type="match status" value="1"/>
</dbReference>
<dbReference type="PROSITE" id="PS01232">
    <property type="entry name" value="PNP_UDP_1"/>
    <property type="match status" value="1"/>
</dbReference>
<keyword id="KW-0328">Glycosyltransferase</keyword>
<keyword id="KW-1185">Reference proteome</keyword>
<keyword id="KW-0808">Transferase</keyword>
<proteinExistence type="inferred from homology"/>
<organism>
    <name type="scientific">Vibrio cholerae serotype O1 (strain ATCC 39315 / El Tor Inaba N16961)</name>
    <dbReference type="NCBI Taxonomy" id="243277"/>
    <lineage>
        <taxon>Bacteria</taxon>
        <taxon>Pseudomonadati</taxon>
        <taxon>Pseudomonadota</taxon>
        <taxon>Gammaproteobacteria</taxon>
        <taxon>Vibrionales</taxon>
        <taxon>Vibrionaceae</taxon>
        <taxon>Vibrio</taxon>
    </lineage>
</organism>
<evidence type="ECO:0000250" key="1">
    <source>
        <dbReference type="UniProtKB" id="P50389"/>
    </source>
</evidence>
<evidence type="ECO:0000255" key="2">
    <source>
        <dbReference type="HAMAP-Rule" id="MF_01627"/>
    </source>
</evidence>
<evidence type="ECO:0000305" key="3"/>
<protein>
    <recommendedName>
        <fullName evidence="2">Purine nucleoside phosphorylase DeoD-type 2</fullName>
        <shortName evidence="2">PNP 2</shortName>
        <ecNumber evidence="2">2.4.2.1</ecNumber>
    </recommendedName>
</protein>
<feature type="chain" id="PRO_0000063170" description="Purine nucleoside phosphorylase DeoD-type 2">
    <location>
        <begin position="1"/>
        <end position="236"/>
    </location>
</feature>
<feature type="active site" description="Proton donor" evidence="2">
    <location>
        <position position="205"/>
    </location>
</feature>
<feature type="binding site" evidence="1">
    <location>
        <position position="5"/>
    </location>
    <ligand>
        <name>a purine D-ribonucleoside</name>
        <dbReference type="ChEBI" id="CHEBI:142355"/>
        <note>ligand shared between dimeric partners</note>
    </ligand>
</feature>
<feature type="binding site" description="in other chain" evidence="1">
    <location>
        <position position="21"/>
    </location>
    <ligand>
        <name>phosphate</name>
        <dbReference type="ChEBI" id="CHEBI:43474"/>
        <note>ligand shared between dimeric partners</note>
    </ligand>
</feature>
<feature type="binding site" description="in other chain" evidence="1">
    <location>
        <position position="25"/>
    </location>
    <ligand>
        <name>phosphate</name>
        <dbReference type="ChEBI" id="CHEBI:43474"/>
        <note>ligand shared between dimeric partners</note>
    </ligand>
</feature>
<feature type="binding site" evidence="1">
    <location>
        <position position="44"/>
    </location>
    <ligand>
        <name>phosphate</name>
        <dbReference type="ChEBI" id="CHEBI:43474"/>
        <note>ligand shared between dimeric partners</note>
    </ligand>
</feature>
<feature type="binding site" description="in other chain" evidence="1">
    <location>
        <begin position="88"/>
        <end position="91"/>
    </location>
    <ligand>
        <name>phosphate</name>
        <dbReference type="ChEBI" id="CHEBI:43474"/>
        <note>ligand shared between dimeric partners</note>
    </ligand>
</feature>
<feature type="binding site" description="in other chain" evidence="1">
    <location>
        <begin position="180"/>
        <end position="182"/>
    </location>
    <ligand>
        <name>a purine D-ribonucleoside</name>
        <dbReference type="ChEBI" id="CHEBI:142355"/>
        <note>ligand shared between dimeric partners</note>
    </ligand>
</feature>
<feature type="binding site" description="in other chain" evidence="1">
    <location>
        <begin position="204"/>
        <end position="205"/>
    </location>
    <ligand>
        <name>a purine D-ribonucleoside</name>
        <dbReference type="ChEBI" id="CHEBI:142355"/>
        <note>ligand shared between dimeric partners</note>
    </ligand>
</feature>
<feature type="site" description="Important for catalytic activity" evidence="2">
    <location>
        <position position="218"/>
    </location>
</feature>
<name>DEOD2_VIBCH</name>
<reference key="1">
    <citation type="journal article" date="2000" name="Nature">
        <title>DNA sequence of both chromosomes of the cholera pathogen Vibrio cholerae.</title>
        <authorList>
            <person name="Heidelberg J.F."/>
            <person name="Eisen J.A."/>
            <person name="Nelson W.C."/>
            <person name="Clayton R.A."/>
            <person name="Gwinn M.L."/>
            <person name="Dodson R.J."/>
            <person name="Haft D.H."/>
            <person name="Hickey E.K."/>
            <person name="Peterson J.D."/>
            <person name="Umayam L.A."/>
            <person name="Gill S.R."/>
            <person name="Nelson K.E."/>
            <person name="Read T.D."/>
            <person name="Tettelin H."/>
            <person name="Richardson D.L."/>
            <person name="Ermolaeva M.D."/>
            <person name="Vamathevan J.J."/>
            <person name="Bass S."/>
            <person name="Qin H."/>
            <person name="Dragoi I."/>
            <person name="Sellers P."/>
            <person name="McDonald L.A."/>
            <person name="Utterback T.R."/>
            <person name="Fleischmann R.D."/>
            <person name="Nierman W.C."/>
            <person name="White O."/>
            <person name="Salzberg S.L."/>
            <person name="Smith H.O."/>
            <person name="Colwell R.R."/>
            <person name="Mekalanos J.J."/>
            <person name="Venter J.C."/>
            <person name="Fraser C.M."/>
        </authorList>
    </citation>
    <scope>NUCLEOTIDE SEQUENCE [LARGE SCALE GENOMIC DNA]</scope>
    <source>
        <strain>ATCC 39315 / El Tor Inaba N16961</strain>
    </source>
</reference>